<comment type="function">
    <text evidence="1">Component of the Nup107-160 subcomplex of the nuclear pore complex (NPC). The Nup107-160 subcomplex is required for the assembly of a functional NPC. The Nup107-160 subcomplex is also required for normal kinetochore microtubule attachment, mitotic progression and chromosome segregation (By similarity).</text>
</comment>
<comment type="subunit">
    <text evidence="1">Component of the Nup107-160 subcomplex of the nuclear pore complex (NPC). The Nup107-160 subcomplex includes NUP160, NUP133, NUP107, NUP98, NUP85, NUP43, NUP37, SEH1 and SEC13 (By similarity).</text>
</comment>
<comment type="subcellular location">
    <subcellularLocation>
        <location evidence="1">Chromosome</location>
        <location evidence="1">Centromere</location>
        <location evidence="1">Kinetochore</location>
    </subcellularLocation>
    <subcellularLocation>
        <location evidence="1">Nucleus</location>
        <location evidence="1">Nuclear pore complex</location>
    </subcellularLocation>
</comment>
<name>NUP43_MOUSE</name>
<protein>
    <recommendedName>
        <fullName>Nucleoporin Nup43</fullName>
    </recommendedName>
    <alternativeName>
        <fullName>Nup107-160 subcomplex subunit Nup43</fullName>
    </alternativeName>
</protein>
<keyword id="KW-0007">Acetylation</keyword>
<keyword id="KW-0131">Cell cycle</keyword>
<keyword id="KW-0132">Cell division</keyword>
<keyword id="KW-0137">Centromere</keyword>
<keyword id="KW-0158">Chromosome</keyword>
<keyword id="KW-0159">Chromosome partition</keyword>
<keyword id="KW-0995">Kinetochore</keyword>
<keyword id="KW-0498">Mitosis</keyword>
<keyword id="KW-0509">mRNA transport</keyword>
<keyword id="KW-0906">Nuclear pore complex</keyword>
<keyword id="KW-0539">Nucleus</keyword>
<keyword id="KW-0653">Protein transport</keyword>
<keyword id="KW-1185">Reference proteome</keyword>
<keyword id="KW-0677">Repeat</keyword>
<keyword id="KW-0811">Translocation</keyword>
<keyword id="KW-0813">Transport</keyword>
<keyword id="KW-0853">WD repeat</keyword>
<reference key="1">
    <citation type="journal article" date="2005" name="Science">
        <title>The transcriptional landscape of the mammalian genome.</title>
        <authorList>
            <person name="Carninci P."/>
            <person name="Kasukawa T."/>
            <person name="Katayama S."/>
            <person name="Gough J."/>
            <person name="Frith M.C."/>
            <person name="Maeda N."/>
            <person name="Oyama R."/>
            <person name="Ravasi T."/>
            <person name="Lenhard B."/>
            <person name="Wells C."/>
            <person name="Kodzius R."/>
            <person name="Shimokawa K."/>
            <person name="Bajic V.B."/>
            <person name="Brenner S.E."/>
            <person name="Batalov S."/>
            <person name="Forrest A.R."/>
            <person name="Zavolan M."/>
            <person name="Davis M.J."/>
            <person name="Wilming L.G."/>
            <person name="Aidinis V."/>
            <person name="Allen J.E."/>
            <person name="Ambesi-Impiombato A."/>
            <person name="Apweiler R."/>
            <person name="Aturaliya R.N."/>
            <person name="Bailey T.L."/>
            <person name="Bansal M."/>
            <person name="Baxter L."/>
            <person name="Beisel K.W."/>
            <person name="Bersano T."/>
            <person name="Bono H."/>
            <person name="Chalk A.M."/>
            <person name="Chiu K.P."/>
            <person name="Choudhary V."/>
            <person name="Christoffels A."/>
            <person name="Clutterbuck D.R."/>
            <person name="Crowe M.L."/>
            <person name="Dalla E."/>
            <person name="Dalrymple B.P."/>
            <person name="de Bono B."/>
            <person name="Della Gatta G."/>
            <person name="di Bernardo D."/>
            <person name="Down T."/>
            <person name="Engstrom P."/>
            <person name="Fagiolini M."/>
            <person name="Faulkner G."/>
            <person name="Fletcher C.F."/>
            <person name="Fukushima T."/>
            <person name="Furuno M."/>
            <person name="Futaki S."/>
            <person name="Gariboldi M."/>
            <person name="Georgii-Hemming P."/>
            <person name="Gingeras T.R."/>
            <person name="Gojobori T."/>
            <person name="Green R.E."/>
            <person name="Gustincich S."/>
            <person name="Harbers M."/>
            <person name="Hayashi Y."/>
            <person name="Hensch T.K."/>
            <person name="Hirokawa N."/>
            <person name="Hill D."/>
            <person name="Huminiecki L."/>
            <person name="Iacono M."/>
            <person name="Ikeo K."/>
            <person name="Iwama A."/>
            <person name="Ishikawa T."/>
            <person name="Jakt M."/>
            <person name="Kanapin A."/>
            <person name="Katoh M."/>
            <person name="Kawasawa Y."/>
            <person name="Kelso J."/>
            <person name="Kitamura H."/>
            <person name="Kitano H."/>
            <person name="Kollias G."/>
            <person name="Krishnan S.P."/>
            <person name="Kruger A."/>
            <person name="Kummerfeld S.K."/>
            <person name="Kurochkin I.V."/>
            <person name="Lareau L.F."/>
            <person name="Lazarevic D."/>
            <person name="Lipovich L."/>
            <person name="Liu J."/>
            <person name="Liuni S."/>
            <person name="McWilliam S."/>
            <person name="Madan Babu M."/>
            <person name="Madera M."/>
            <person name="Marchionni L."/>
            <person name="Matsuda H."/>
            <person name="Matsuzawa S."/>
            <person name="Miki H."/>
            <person name="Mignone F."/>
            <person name="Miyake S."/>
            <person name="Morris K."/>
            <person name="Mottagui-Tabar S."/>
            <person name="Mulder N."/>
            <person name="Nakano N."/>
            <person name="Nakauchi H."/>
            <person name="Ng P."/>
            <person name="Nilsson R."/>
            <person name="Nishiguchi S."/>
            <person name="Nishikawa S."/>
            <person name="Nori F."/>
            <person name="Ohara O."/>
            <person name="Okazaki Y."/>
            <person name="Orlando V."/>
            <person name="Pang K.C."/>
            <person name="Pavan W.J."/>
            <person name="Pavesi G."/>
            <person name="Pesole G."/>
            <person name="Petrovsky N."/>
            <person name="Piazza S."/>
            <person name="Reed J."/>
            <person name="Reid J.F."/>
            <person name="Ring B.Z."/>
            <person name="Ringwald M."/>
            <person name="Rost B."/>
            <person name="Ruan Y."/>
            <person name="Salzberg S.L."/>
            <person name="Sandelin A."/>
            <person name="Schneider C."/>
            <person name="Schoenbach C."/>
            <person name="Sekiguchi K."/>
            <person name="Semple C.A."/>
            <person name="Seno S."/>
            <person name="Sessa L."/>
            <person name="Sheng Y."/>
            <person name="Shibata Y."/>
            <person name="Shimada H."/>
            <person name="Shimada K."/>
            <person name="Silva D."/>
            <person name="Sinclair B."/>
            <person name="Sperling S."/>
            <person name="Stupka E."/>
            <person name="Sugiura K."/>
            <person name="Sultana R."/>
            <person name="Takenaka Y."/>
            <person name="Taki K."/>
            <person name="Tammoja K."/>
            <person name="Tan S.L."/>
            <person name="Tang S."/>
            <person name="Taylor M.S."/>
            <person name="Tegner J."/>
            <person name="Teichmann S.A."/>
            <person name="Ueda H.R."/>
            <person name="van Nimwegen E."/>
            <person name="Verardo R."/>
            <person name="Wei C.L."/>
            <person name="Yagi K."/>
            <person name="Yamanishi H."/>
            <person name="Zabarovsky E."/>
            <person name="Zhu S."/>
            <person name="Zimmer A."/>
            <person name="Hide W."/>
            <person name="Bult C."/>
            <person name="Grimmond S.M."/>
            <person name="Teasdale R.D."/>
            <person name="Liu E.T."/>
            <person name="Brusic V."/>
            <person name="Quackenbush J."/>
            <person name="Wahlestedt C."/>
            <person name="Mattick J.S."/>
            <person name="Hume D.A."/>
            <person name="Kai C."/>
            <person name="Sasaki D."/>
            <person name="Tomaru Y."/>
            <person name="Fukuda S."/>
            <person name="Kanamori-Katayama M."/>
            <person name="Suzuki M."/>
            <person name="Aoki J."/>
            <person name="Arakawa T."/>
            <person name="Iida J."/>
            <person name="Imamura K."/>
            <person name="Itoh M."/>
            <person name="Kato T."/>
            <person name="Kawaji H."/>
            <person name="Kawagashira N."/>
            <person name="Kawashima T."/>
            <person name="Kojima M."/>
            <person name="Kondo S."/>
            <person name="Konno H."/>
            <person name="Nakano K."/>
            <person name="Ninomiya N."/>
            <person name="Nishio T."/>
            <person name="Okada M."/>
            <person name="Plessy C."/>
            <person name="Shibata K."/>
            <person name="Shiraki T."/>
            <person name="Suzuki S."/>
            <person name="Tagami M."/>
            <person name="Waki K."/>
            <person name="Watahiki A."/>
            <person name="Okamura-Oho Y."/>
            <person name="Suzuki H."/>
            <person name="Kawai J."/>
            <person name="Hayashizaki Y."/>
        </authorList>
    </citation>
    <scope>NUCLEOTIDE SEQUENCE [LARGE SCALE MRNA]</scope>
</reference>
<reference key="2">
    <citation type="journal article" date="2009" name="PLoS Biol.">
        <title>Lineage-specific biology revealed by a finished genome assembly of the mouse.</title>
        <authorList>
            <person name="Church D.M."/>
            <person name="Goodstadt L."/>
            <person name="Hillier L.W."/>
            <person name="Zody M.C."/>
            <person name="Goldstein S."/>
            <person name="She X."/>
            <person name="Bult C.J."/>
            <person name="Agarwala R."/>
            <person name="Cherry J.L."/>
            <person name="DiCuccio M."/>
            <person name="Hlavina W."/>
            <person name="Kapustin Y."/>
            <person name="Meric P."/>
            <person name="Maglott D."/>
            <person name="Birtle Z."/>
            <person name="Marques A.C."/>
            <person name="Graves T."/>
            <person name="Zhou S."/>
            <person name="Teague B."/>
            <person name="Potamousis K."/>
            <person name="Churas C."/>
            <person name="Place M."/>
            <person name="Herschleb J."/>
            <person name="Runnheim R."/>
            <person name="Forrest D."/>
            <person name="Amos-Landgraf J."/>
            <person name="Schwartz D.C."/>
            <person name="Cheng Z."/>
            <person name="Lindblad-Toh K."/>
            <person name="Eichler E.E."/>
            <person name="Ponting C.P."/>
        </authorList>
    </citation>
    <scope>NUCLEOTIDE SEQUENCE [LARGE SCALE GENOMIC DNA]</scope>
    <source>
        <strain>C57BL/6J</strain>
    </source>
</reference>
<reference key="3">
    <citation type="journal article" date="2010" name="Cell">
        <title>A tissue-specific atlas of mouse protein phosphorylation and expression.</title>
        <authorList>
            <person name="Huttlin E.L."/>
            <person name="Jedrychowski M.P."/>
            <person name="Elias J.E."/>
            <person name="Goswami T."/>
            <person name="Rad R."/>
            <person name="Beausoleil S.A."/>
            <person name="Villen J."/>
            <person name="Haas W."/>
            <person name="Sowa M.E."/>
            <person name="Gygi S.P."/>
        </authorList>
    </citation>
    <scope>IDENTIFICATION BY MASS SPECTROMETRY [LARGE SCALE ANALYSIS]</scope>
    <source>
        <tissue>Spleen</tissue>
        <tissue>Testis</tissue>
    </source>
</reference>
<sequence length="380" mass="41990">MEEIYAKFVSQKISKTRWRPVPSGSLQTTETFATGSWDNEENCVSLWSIGDFGNLDSDGGFEGDHQLLCDIRHHGDVMDLQFFDQERIVAASSTGCVTVFLHHPNNQTLSVNQQWPAAHYHTGPSSPSYSSAPCTGIVCDNPEIVTVGEDGRINLFRVDHKEAVRTIDNADSSTLHAVTFLRTPEIVTVNSIGQLKIWDFRQQGSEPCQILSLTGDRVPLHCVDRHPDQQHVVATGGQDGMLSIWDVRQGTMPVSLLKAHEAEMWEVHFHPSNPDHLFTCSEDGSLWHWDASTDAPEKSSLFHQGGRSSTFLSHSLSNQAGVHQSLVSSWLSTDPAKDRIEITSLLPSRTLSVNSLDVLGPCLVCGTDAEAIYVTRQLFS</sequence>
<gene>
    <name type="primary">Nup43</name>
</gene>
<organism>
    <name type="scientific">Mus musculus</name>
    <name type="common">Mouse</name>
    <dbReference type="NCBI Taxonomy" id="10090"/>
    <lineage>
        <taxon>Eukaryota</taxon>
        <taxon>Metazoa</taxon>
        <taxon>Chordata</taxon>
        <taxon>Craniata</taxon>
        <taxon>Vertebrata</taxon>
        <taxon>Euteleostomi</taxon>
        <taxon>Mammalia</taxon>
        <taxon>Eutheria</taxon>
        <taxon>Euarchontoglires</taxon>
        <taxon>Glires</taxon>
        <taxon>Rodentia</taxon>
        <taxon>Myomorpha</taxon>
        <taxon>Muroidea</taxon>
        <taxon>Muridae</taxon>
        <taxon>Murinae</taxon>
        <taxon>Mus</taxon>
        <taxon>Mus</taxon>
    </lineage>
</organism>
<evidence type="ECO:0000250" key="1"/>
<evidence type="ECO:0000250" key="2">
    <source>
        <dbReference type="UniProtKB" id="Q8NFH3"/>
    </source>
</evidence>
<evidence type="ECO:0000305" key="3"/>
<proteinExistence type="evidence at protein level"/>
<accession>P59235</accession>
<accession>E9QPN3</accession>
<dbReference type="EMBL" id="AK090019">
    <property type="protein sequence ID" value="BAC41049.1"/>
    <property type="molecule type" value="mRNA"/>
</dbReference>
<dbReference type="EMBL" id="AC156391">
    <property type="status" value="NOT_ANNOTATED_CDS"/>
    <property type="molecule type" value="Genomic_DNA"/>
</dbReference>
<dbReference type="CCDS" id="CCDS48493.1"/>
<dbReference type="RefSeq" id="NP_663752.2">
    <property type="nucleotide sequence ID" value="NM_145706.2"/>
</dbReference>
<dbReference type="SMR" id="P59235"/>
<dbReference type="BioGRID" id="213750">
    <property type="interactions" value="13"/>
</dbReference>
<dbReference type="ComplexPortal" id="CPX-4474">
    <property type="entry name" value="Nuclear pore complex"/>
</dbReference>
<dbReference type="FunCoup" id="P59235">
    <property type="interactions" value="4603"/>
</dbReference>
<dbReference type="IntAct" id="P59235">
    <property type="interactions" value="2"/>
</dbReference>
<dbReference type="STRING" id="10090.ENSMUSP00000046732"/>
<dbReference type="PhosphoSitePlus" id="P59235"/>
<dbReference type="SwissPalm" id="P59235"/>
<dbReference type="PaxDb" id="10090-ENSMUSP00000046732"/>
<dbReference type="PeptideAtlas" id="P59235"/>
<dbReference type="ProteomicsDB" id="293906"/>
<dbReference type="Pumba" id="P59235"/>
<dbReference type="Antibodypedia" id="33283">
    <property type="antibodies" value="254 antibodies from 23 providers"/>
</dbReference>
<dbReference type="Ensembl" id="ENSMUST00000040135.9">
    <property type="protein sequence ID" value="ENSMUSP00000046732.9"/>
    <property type="gene ID" value="ENSMUSG00000040034.16"/>
</dbReference>
<dbReference type="GeneID" id="69912"/>
<dbReference type="KEGG" id="mmu:69912"/>
<dbReference type="UCSC" id="uc007eic.2">
    <property type="organism name" value="mouse"/>
</dbReference>
<dbReference type="AGR" id="MGI:1917162"/>
<dbReference type="CTD" id="348995"/>
<dbReference type="MGI" id="MGI:1917162">
    <property type="gene designation" value="Nup43"/>
</dbReference>
<dbReference type="VEuPathDB" id="HostDB:ENSMUSG00000040034"/>
<dbReference type="eggNOG" id="KOG4714">
    <property type="taxonomic scope" value="Eukaryota"/>
</dbReference>
<dbReference type="GeneTree" id="ENSGT00390000004803"/>
<dbReference type="HOGENOM" id="CLU_060663_1_0_1"/>
<dbReference type="InParanoid" id="P59235"/>
<dbReference type="OMA" id="HDGDVMD"/>
<dbReference type="OrthoDB" id="9890280at2759"/>
<dbReference type="PhylomeDB" id="P59235"/>
<dbReference type="TreeFam" id="TF321692"/>
<dbReference type="Reactome" id="R-MMU-141444">
    <property type="pathway name" value="Amplification of signal from unattached kinetochores via a MAD2 inhibitory signal"/>
</dbReference>
<dbReference type="Reactome" id="R-MMU-159227">
    <property type="pathway name" value="Transport of the SLBP independent Mature mRNA"/>
</dbReference>
<dbReference type="Reactome" id="R-MMU-159230">
    <property type="pathway name" value="Transport of the SLBP Dependant Mature mRNA"/>
</dbReference>
<dbReference type="Reactome" id="R-MMU-159231">
    <property type="pathway name" value="Transport of Mature mRNA Derived from an Intronless Transcript"/>
</dbReference>
<dbReference type="Reactome" id="R-MMU-159236">
    <property type="pathway name" value="Transport of Mature mRNA derived from an Intron-Containing Transcript"/>
</dbReference>
<dbReference type="Reactome" id="R-MMU-170822">
    <property type="pathway name" value="Regulation of Glucokinase by Glucokinase Regulatory Protein"/>
</dbReference>
<dbReference type="Reactome" id="R-MMU-191859">
    <property type="pathway name" value="snRNP Assembly"/>
</dbReference>
<dbReference type="Reactome" id="R-MMU-2467813">
    <property type="pathway name" value="Separation of Sister Chromatids"/>
</dbReference>
<dbReference type="Reactome" id="R-MMU-2500257">
    <property type="pathway name" value="Resolution of Sister Chromatid Cohesion"/>
</dbReference>
<dbReference type="Reactome" id="R-MMU-3108214">
    <property type="pathway name" value="SUMOylation of DNA damage response and repair proteins"/>
</dbReference>
<dbReference type="Reactome" id="R-MMU-3232142">
    <property type="pathway name" value="SUMOylation of ubiquitinylation proteins"/>
</dbReference>
<dbReference type="Reactome" id="R-MMU-3301854">
    <property type="pathway name" value="Nuclear Pore Complex (NPC) Disassembly"/>
</dbReference>
<dbReference type="Reactome" id="R-MMU-3371453">
    <property type="pathway name" value="Regulation of HSF1-mediated heat shock response"/>
</dbReference>
<dbReference type="Reactome" id="R-MMU-4085377">
    <property type="pathway name" value="SUMOylation of SUMOylation proteins"/>
</dbReference>
<dbReference type="Reactome" id="R-MMU-4551638">
    <property type="pathway name" value="SUMOylation of chromatin organization proteins"/>
</dbReference>
<dbReference type="Reactome" id="R-MMU-4570464">
    <property type="pathway name" value="SUMOylation of RNA binding proteins"/>
</dbReference>
<dbReference type="Reactome" id="R-MMU-4615885">
    <property type="pathway name" value="SUMOylation of DNA replication proteins"/>
</dbReference>
<dbReference type="Reactome" id="R-MMU-5578749">
    <property type="pathway name" value="Transcriptional regulation by small RNAs"/>
</dbReference>
<dbReference type="Reactome" id="R-MMU-5663220">
    <property type="pathway name" value="RHO GTPases Activate Formins"/>
</dbReference>
<dbReference type="Reactome" id="R-MMU-68877">
    <property type="pathway name" value="Mitotic Prometaphase"/>
</dbReference>
<dbReference type="Reactome" id="R-MMU-9615933">
    <property type="pathway name" value="Postmitotic nuclear pore complex (NPC) reformation"/>
</dbReference>
<dbReference type="Reactome" id="R-MMU-9648025">
    <property type="pathway name" value="EML4 and NUDC in mitotic spindle formation"/>
</dbReference>
<dbReference type="BioGRID-ORCS" id="69912">
    <property type="hits" value="25 hits in 79 CRISPR screens"/>
</dbReference>
<dbReference type="PRO" id="PR:P59235"/>
<dbReference type="Proteomes" id="UP000000589">
    <property type="component" value="Chromosome 10"/>
</dbReference>
<dbReference type="RNAct" id="P59235">
    <property type="molecule type" value="protein"/>
</dbReference>
<dbReference type="Bgee" id="ENSMUSG00000040034">
    <property type="expression patterns" value="Expressed in epiblast (generic) and 83 other cell types or tissues"/>
</dbReference>
<dbReference type="GO" id="GO:0005829">
    <property type="term" value="C:cytosol"/>
    <property type="evidence" value="ECO:0007669"/>
    <property type="project" value="Ensembl"/>
</dbReference>
<dbReference type="GO" id="GO:0000776">
    <property type="term" value="C:kinetochore"/>
    <property type="evidence" value="ECO:0007669"/>
    <property type="project" value="UniProtKB-KW"/>
</dbReference>
<dbReference type="GO" id="GO:0005635">
    <property type="term" value="C:nuclear envelope"/>
    <property type="evidence" value="ECO:0000266"/>
    <property type="project" value="ComplexPortal"/>
</dbReference>
<dbReference type="GO" id="GO:0005643">
    <property type="term" value="C:nuclear pore"/>
    <property type="evidence" value="ECO:0000303"/>
    <property type="project" value="ComplexPortal"/>
</dbReference>
<dbReference type="GO" id="GO:0031080">
    <property type="term" value="C:nuclear pore outer ring"/>
    <property type="evidence" value="ECO:0000250"/>
    <property type="project" value="UniProtKB"/>
</dbReference>
<dbReference type="GO" id="GO:0016607">
    <property type="term" value="C:nuclear speck"/>
    <property type="evidence" value="ECO:0007669"/>
    <property type="project" value="Ensembl"/>
</dbReference>
<dbReference type="GO" id="GO:0051301">
    <property type="term" value="P:cell division"/>
    <property type="evidence" value="ECO:0007669"/>
    <property type="project" value="UniProtKB-KW"/>
</dbReference>
<dbReference type="GO" id="GO:0007059">
    <property type="term" value="P:chromosome segregation"/>
    <property type="evidence" value="ECO:0007669"/>
    <property type="project" value="UniProtKB-KW"/>
</dbReference>
<dbReference type="GO" id="GO:0051028">
    <property type="term" value="P:mRNA transport"/>
    <property type="evidence" value="ECO:0007669"/>
    <property type="project" value="UniProtKB-KW"/>
</dbReference>
<dbReference type="GO" id="GO:0006913">
    <property type="term" value="P:nucleocytoplasmic transport"/>
    <property type="evidence" value="ECO:0000303"/>
    <property type="project" value="ComplexPortal"/>
</dbReference>
<dbReference type="GO" id="GO:0015031">
    <property type="term" value="P:protein transport"/>
    <property type="evidence" value="ECO:0007669"/>
    <property type="project" value="UniProtKB-KW"/>
</dbReference>
<dbReference type="Gene3D" id="2.130.10.10">
    <property type="entry name" value="YVTN repeat-like/Quinoprotein amine dehydrogenase"/>
    <property type="match status" value="1"/>
</dbReference>
<dbReference type="InterPro" id="IPR015943">
    <property type="entry name" value="WD40/YVTN_repeat-like_dom_sf"/>
</dbReference>
<dbReference type="InterPro" id="IPR019775">
    <property type="entry name" value="WD40_repeat_CS"/>
</dbReference>
<dbReference type="InterPro" id="IPR036322">
    <property type="entry name" value="WD40_repeat_dom_sf"/>
</dbReference>
<dbReference type="InterPro" id="IPR001680">
    <property type="entry name" value="WD40_rpt"/>
</dbReference>
<dbReference type="PANTHER" id="PTHR22652">
    <property type="entry name" value="NUCLEOPORIN NUP43"/>
    <property type="match status" value="1"/>
</dbReference>
<dbReference type="PANTHER" id="PTHR22652:SF0">
    <property type="entry name" value="NUCLEOPORIN NUP43"/>
    <property type="match status" value="1"/>
</dbReference>
<dbReference type="Pfam" id="PF00400">
    <property type="entry name" value="WD40"/>
    <property type="match status" value="2"/>
</dbReference>
<dbReference type="SMART" id="SM00320">
    <property type="entry name" value="WD40"/>
    <property type="match status" value="5"/>
</dbReference>
<dbReference type="SUPFAM" id="SSF50978">
    <property type="entry name" value="WD40 repeat-like"/>
    <property type="match status" value="1"/>
</dbReference>
<dbReference type="PROSITE" id="PS00678">
    <property type="entry name" value="WD_REPEATS_1"/>
    <property type="match status" value="1"/>
</dbReference>
<dbReference type="PROSITE" id="PS50082">
    <property type="entry name" value="WD_REPEATS_2"/>
    <property type="match status" value="2"/>
</dbReference>
<dbReference type="PROSITE" id="PS50294">
    <property type="entry name" value="WD_REPEATS_REGION"/>
    <property type="match status" value="1"/>
</dbReference>
<feature type="chain" id="PRO_0000051112" description="Nucleoporin Nup43">
    <location>
        <begin position="1"/>
        <end position="380"/>
    </location>
</feature>
<feature type="repeat" description="WD 1">
    <location>
        <begin position="8"/>
        <end position="57"/>
    </location>
</feature>
<feature type="repeat" description="WD 2">
    <location>
        <begin position="72"/>
        <end position="110"/>
    </location>
</feature>
<feature type="repeat" description="WD 3">
    <location>
        <begin position="119"/>
        <end position="166"/>
    </location>
</feature>
<feature type="repeat" description="WD 4">
    <location>
        <begin position="170"/>
        <end position="208"/>
    </location>
</feature>
<feature type="repeat" description="WD 5">
    <location>
        <begin position="215"/>
        <end position="255"/>
    </location>
</feature>
<feature type="repeat" description="WD 6">
    <location>
        <begin position="259"/>
        <end position="299"/>
    </location>
</feature>
<feature type="modified residue" description="N-acetylmethionine" evidence="2">
    <location>
        <position position="1"/>
    </location>
</feature>
<feature type="sequence conflict" description="In Ref. 1; BAC41049." evidence="3" ref="1">
    <original>H</original>
    <variation>Y</variation>
    <location>
        <position position="103"/>
    </location>
</feature>
<feature type="sequence conflict" description="In Ref. 1; BAC41049." evidence="3" ref="1">
    <original>D</original>
    <variation>N</variation>
    <location>
        <position position="294"/>
    </location>
</feature>